<comment type="function">
    <text evidence="1">Catalyzes the transfer of the enolpyruvyl moiety of phosphoenolpyruvate (PEP) to the 5-hydroxyl of shikimate-3-phosphate (S3P) to produce enolpyruvyl shikimate-3-phosphate and inorganic phosphate.</text>
</comment>
<comment type="catalytic activity">
    <reaction evidence="1">
        <text>3-phosphoshikimate + phosphoenolpyruvate = 5-O-(1-carboxyvinyl)-3-phosphoshikimate + phosphate</text>
        <dbReference type="Rhea" id="RHEA:21256"/>
        <dbReference type="ChEBI" id="CHEBI:43474"/>
        <dbReference type="ChEBI" id="CHEBI:57701"/>
        <dbReference type="ChEBI" id="CHEBI:58702"/>
        <dbReference type="ChEBI" id="CHEBI:145989"/>
        <dbReference type="EC" id="2.5.1.19"/>
    </reaction>
    <physiologicalReaction direction="left-to-right" evidence="1">
        <dbReference type="Rhea" id="RHEA:21257"/>
    </physiologicalReaction>
</comment>
<comment type="pathway">
    <text evidence="1">Metabolic intermediate biosynthesis; chorismate biosynthesis; chorismate from D-erythrose 4-phosphate and phosphoenolpyruvate: step 6/7.</text>
</comment>
<comment type="subunit">
    <text evidence="1">Monomer.</text>
</comment>
<comment type="subcellular location">
    <subcellularLocation>
        <location evidence="1">Cytoplasm</location>
    </subcellularLocation>
</comment>
<comment type="similarity">
    <text evidence="1">Belongs to the EPSP synthase family.</text>
</comment>
<dbReference type="EC" id="2.5.1.19" evidence="1"/>
<dbReference type="EMBL" id="BX251410">
    <property type="protein sequence ID" value="CAD66871.1"/>
    <property type="molecule type" value="Genomic_DNA"/>
</dbReference>
<dbReference type="RefSeq" id="WP_011096152.1">
    <property type="nucleotide sequence ID" value="NC_004551.1"/>
</dbReference>
<dbReference type="SMR" id="Q83I86"/>
<dbReference type="GeneID" id="67387970"/>
<dbReference type="KEGG" id="tws:TW194"/>
<dbReference type="HOGENOM" id="CLU_024321_0_0_11"/>
<dbReference type="UniPathway" id="UPA00053">
    <property type="reaction ID" value="UER00089"/>
</dbReference>
<dbReference type="GO" id="GO:0005737">
    <property type="term" value="C:cytoplasm"/>
    <property type="evidence" value="ECO:0007669"/>
    <property type="project" value="UniProtKB-SubCell"/>
</dbReference>
<dbReference type="GO" id="GO:0003866">
    <property type="term" value="F:3-phosphoshikimate 1-carboxyvinyltransferase activity"/>
    <property type="evidence" value="ECO:0007669"/>
    <property type="project" value="UniProtKB-UniRule"/>
</dbReference>
<dbReference type="GO" id="GO:0008652">
    <property type="term" value="P:amino acid biosynthetic process"/>
    <property type="evidence" value="ECO:0007669"/>
    <property type="project" value="UniProtKB-KW"/>
</dbReference>
<dbReference type="GO" id="GO:0009073">
    <property type="term" value="P:aromatic amino acid family biosynthetic process"/>
    <property type="evidence" value="ECO:0007669"/>
    <property type="project" value="UniProtKB-KW"/>
</dbReference>
<dbReference type="GO" id="GO:0009423">
    <property type="term" value="P:chorismate biosynthetic process"/>
    <property type="evidence" value="ECO:0007669"/>
    <property type="project" value="UniProtKB-UniRule"/>
</dbReference>
<dbReference type="CDD" id="cd01556">
    <property type="entry name" value="EPSP_synthase"/>
    <property type="match status" value="1"/>
</dbReference>
<dbReference type="Gene3D" id="3.65.10.10">
    <property type="entry name" value="Enolpyruvate transferase domain"/>
    <property type="match status" value="2"/>
</dbReference>
<dbReference type="HAMAP" id="MF_00210">
    <property type="entry name" value="EPSP_synth"/>
    <property type="match status" value="1"/>
</dbReference>
<dbReference type="InterPro" id="IPR001986">
    <property type="entry name" value="Enolpyruvate_Tfrase_dom"/>
</dbReference>
<dbReference type="InterPro" id="IPR036968">
    <property type="entry name" value="Enolpyruvate_Tfrase_sf"/>
</dbReference>
<dbReference type="InterPro" id="IPR006264">
    <property type="entry name" value="EPSP_synthase"/>
</dbReference>
<dbReference type="InterPro" id="IPR023193">
    <property type="entry name" value="EPSP_synthase_CS"/>
</dbReference>
<dbReference type="InterPro" id="IPR013792">
    <property type="entry name" value="RNA3'P_cycl/enolpyr_Trfase_a/b"/>
</dbReference>
<dbReference type="NCBIfam" id="TIGR01356">
    <property type="entry name" value="aroA"/>
    <property type="match status" value="1"/>
</dbReference>
<dbReference type="PANTHER" id="PTHR21090">
    <property type="entry name" value="AROM/DEHYDROQUINATE SYNTHASE"/>
    <property type="match status" value="1"/>
</dbReference>
<dbReference type="PANTHER" id="PTHR21090:SF5">
    <property type="entry name" value="PENTAFUNCTIONAL AROM POLYPEPTIDE"/>
    <property type="match status" value="1"/>
</dbReference>
<dbReference type="Pfam" id="PF00275">
    <property type="entry name" value="EPSP_synthase"/>
    <property type="match status" value="1"/>
</dbReference>
<dbReference type="PIRSF" id="PIRSF000505">
    <property type="entry name" value="EPSPS"/>
    <property type="match status" value="1"/>
</dbReference>
<dbReference type="SUPFAM" id="SSF55205">
    <property type="entry name" value="EPT/RTPC-like"/>
    <property type="match status" value="1"/>
</dbReference>
<dbReference type="PROSITE" id="PS00885">
    <property type="entry name" value="EPSP_SYNTHASE_2"/>
    <property type="match status" value="1"/>
</dbReference>
<feature type="chain" id="PRO_1000099763" description="3-phosphoshikimate 1-carboxyvinyltransferase">
    <location>
        <begin position="1"/>
        <end position="443"/>
    </location>
</feature>
<feature type="active site" description="Proton acceptor" evidence="1">
    <location>
        <position position="331"/>
    </location>
</feature>
<feature type="binding site" evidence="1">
    <location>
        <position position="25"/>
    </location>
    <ligand>
        <name>3-phosphoshikimate</name>
        <dbReference type="ChEBI" id="CHEBI:145989"/>
    </ligand>
</feature>
<feature type="binding site" evidence="1">
    <location>
        <position position="25"/>
    </location>
    <ligand>
        <name>phosphoenolpyruvate</name>
        <dbReference type="ChEBI" id="CHEBI:58702"/>
    </ligand>
</feature>
<feature type="binding site" evidence="1">
    <location>
        <position position="26"/>
    </location>
    <ligand>
        <name>3-phosphoshikimate</name>
        <dbReference type="ChEBI" id="CHEBI:145989"/>
    </ligand>
</feature>
<feature type="binding site" evidence="1">
    <location>
        <position position="30"/>
    </location>
    <ligand>
        <name>3-phosphoshikimate</name>
        <dbReference type="ChEBI" id="CHEBI:145989"/>
    </ligand>
</feature>
<feature type="binding site" evidence="1">
    <location>
        <position position="117"/>
    </location>
    <ligand>
        <name>phosphoenolpyruvate</name>
        <dbReference type="ChEBI" id="CHEBI:58702"/>
    </ligand>
</feature>
<feature type="binding site" evidence="1">
    <location>
        <position position="145"/>
    </location>
    <ligand>
        <name>phosphoenolpyruvate</name>
        <dbReference type="ChEBI" id="CHEBI:58702"/>
    </ligand>
</feature>
<feature type="binding site" evidence="1">
    <location>
        <position position="188"/>
    </location>
    <ligand>
        <name>3-phosphoshikimate</name>
        <dbReference type="ChEBI" id="CHEBI:145989"/>
    </ligand>
</feature>
<feature type="binding site" evidence="1">
    <location>
        <position position="189"/>
    </location>
    <ligand>
        <name>3-phosphoshikimate</name>
        <dbReference type="ChEBI" id="CHEBI:145989"/>
    </ligand>
</feature>
<feature type="binding site" evidence="1">
    <location>
        <position position="190"/>
    </location>
    <ligand>
        <name>3-phosphoshikimate</name>
        <dbReference type="ChEBI" id="CHEBI:145989"/>
    </ligand>
</feature>
<feature type="binding site" evidence="1">
    <location>
        <position position="190"/>
    </location>
    <ligand>
        <name>phosphoenolpyruvate</name>
        <dbReference type="ChEBI" id="CHEBI:58702"/>
    </ligand>
</feature>
<feature type="binding site" evidence="1">
    <location>
        <position position="217"/>
    </location>
    <ligand>
        <name>3-phosphoshikimate</name>
        <dbReference type="ChEBI" id="CHEBI:145989"/>
    </ligand>
</feature>
<feature type="binding site" evidence="1">
    <location>
        <position position="331"/>
    </location>
    <ligand>
        <name>3-phosphoshikimate</name>
        <dbReference type="ChEBI" id="CHEBI:145989"/>
    </ligand>
</feature>
<feature type="binding site" evidence="1">
    <location>
        <position position="358"/>
    </location>
    <ligand>
        <name>3-phosphoshikimate</name>
        <dbReference type="ChEBI" id="CHEBI:145989"/>
    </ligand>
</feature>
<feature type="binding site" evidence="1">
    <location>
        <position position="362"/>
    </location>
    <ligand>
        <name>phosphoenolpyruvate</name>
        <dbReference type="ChEBI" id="CHEBI:58702"/>
    </ligand>
</feature>
<feature type="binding site" evidence="1">
    <location>
        <position position="404"/>
    </location>
    <ligand>
        <name>phosphoenolpyruvate</name>
        <dbReference type="ChEBI" id="CHEBI:58702"/>
    </ligand>
</feature>
<feature type="binding site" evidence="1">
    <location>
        <position position="428"/>
    </location>
    <ligand>
        <name>phosphoenolpyruvate</name>
        <dbReference type="ChEBI" id="CHEBI:58702"/>
    </ligand>
</feature>
<reference key="1">
    <citation type="journal article" date="2003" name="Lancet">
        <title>Sequencing and analysis of the genome of the Whipple's disease bacterium Tropheryma whipplei.</title>
        <authorList>
            <person name="Bentley S.D."/>
            <person name="Maiwald M."/>
            <person name="Murphy L.D."/>
            <person name="Pallen M.J."/>
            <person name="Yeats C.A."/>
            <person name="Dover L.G."/>
            <person name="Norbertczak H.T."/>
            <person name="Besra G.S."/>
            <person name="Quail M.A."/>
            <person name="Harris D.E."/>
            <person name="von Herbay A."/>
            <person name="Goble A."/>
            <person name="Rutter S."/>
            <person name="Squares R."/>
            <person name="Squares S."/>
            <person name="Barrell B.G."/>
            <person name="Parkhill J."/>
            <person name="Relman D.A."/>
        </authorList>
    </citation>
    <scope>NUCLEOTIDE SEQUENCE [LARGE SCALE GENOMIC DNA]</scope>
    <source>
        <strain>TW08/27</strain>
    </source>
</reference>
<accession>Q83I86</accession>
<organism>
    <name type="scientific">Tropheryma whipplei (strain TW08/27)</name>
    <name type="common">Whipple's bacillus</name>
    <dbReference type="NCBI Taxonomy" id="218496"/>
    <lineage>
        <taxon>Bacteria</taxon>
        <taxon>Bacillati</taxon>
        <taxon>Actinomycetota</taxon>
        <taxon>Actinomycetes</taxon>
        <taxon>Micrococcales</taxon>
        <taxon>Tropherymataceae</taxon>
        <taxon>Tropheryma</taxon>
    </lineage>
</organism>
<evidence type="ECO:0000255" key="1">
    <source>
        <dbReference type="HAMAP-Rule" id="MF_00210"/>
    </source>
</evidence>
<sequence>MAKTEMYQPPLGNRALFKMSIPGSKSLTNRHLIIAAIASGETTIHNLLESRDTNLMIEGLRRIGCKIEKLNHTGTHDTGVISPHCTCLNDLIQPSDVRIIPSKHYTCSTKIDCGLAGTVMRFLPVLAGLCKGSVEFFGDDQAIRRPMDGTLHALRKLGVQVDGDRIPFTVHGRGEIEGGALETTEHSSSQFISGLLLSACRFKNGLTLKHIGNPLPSRPYIDMTVEVMREWGINVTHSDGVWAVTPKELTGKHITIEPDLSNAAPFMIGAIVTGGSATIQNWPSKTSQPGKYLEAILPQFGAEITKTANTITVSGTGNITGIRADLGHIGELVPNLVALATLAETPSVFYNIGHIRYHETDRIEALVNEISSLGGTITAGKDYIKITPTTLTRSGVWKTYKDHRMATSGAIIGLRHKLTIEDIECTSKTFPRFADLWSGAFGK</sequence>
<protein>
    <recommendedName>
        <fullName evidence="1">3-phosphoshikimate 1-carboxyvinyltransferase</fullName>
        <ecNumber evidence="1">2.5.1.19</ecNumber>
    </recommendedName>
    <alternativeName>
        <fullName evidence="1">5-enolpyruvylshikimate-3-phosphate synthase</fullName>
        <shortName evidence="1">EPSP synthase</shortName>
        <shortName evidence="1">EPSPS</shortName>
    </alternativeName>
</protein>
<keyword id="KW-0028">Amino-acid biosynthesis</keyword>
<keyword id="KW-0057">Aromatic amino acid biosynthesis</keyword>
<keyword id="KW-0963">Cytoplasm</keyword>
<keyword id="KW-0808">Transferase</keyword>
<gene>
    <name evidence="1" type="primary">aroA</name>
    <name type="ordered locus">TW194</name>
</gene>
<proteinExistence type="inferred from homology"/>
<name>AROA_TROW8</name>